<sequence>MAQGSPATVAACAFCGARRTRSGMVLSTSAADGYLDDEAQFETALRLLPAADQAAVRRRRAGRAVVLASRLLRTLGCAVHTGCAPALLAFDYSRAGKPYLRSRPAPAFSVSRSDCIAVIYVREGGAVGADLASVAECLSWAPDEILQLHDVFSAAELGRLRAAAPGRARAELFAYYWSLKEAYGKFRGTGLAGDLRLADMGELDPLRRGELRTLRRTLQGKHVCLSSRWHDAGHVLSLCEAREPSPTEEICLHKVPMEEVVRLCRPSLGMEKCHVR</sequence>
<reference key="1">
    <citation type="journal article" date="2004" name="Science">
        <title>The Ashbya gossypii genome as a tool for mapping the ancient Saccharomyces cerevisiae genome.</title>
        <authorList>
            <person name="Dietrich F.S."/>
            <person name="Voegeli S."/>
            <person name="Brachat S."/>
            <person name="Lerch A."/>
            <person name="Gates K."/>
            <person name="Steiner S."/>
            <person name="Mohr C."/>
            <person name="Poehlmann R."/>
            <person name="Luedi P."/>
            <person name="Choi S."/>
            <person name="Wing R.A."/>
            <person name="Flavier A."/>
            <person name="Gaffney T.D."/>
            <person name="Philippsen P."/>
        </authorList>
    </citation>
    <scope>NUCLEOTIDE SEQUENCE [LARGE SCALE GENOMIC DNA]</scope>
    <source>
        <strain>ATCC 10895 / CBS 109.51 / FGSC 9923 / NRRL Y-1056</strain>
    </source>
</reference>
<reference key="2">
    <citation type="journal article" date="2013" name="G3 (Bethesda)">
        <title>Genomes of Ashbya fungi isolated from insects reveal four mating-type loci, numerous translocations, lack of transposons, and distinct gene duplications.</title>
        <authorList>
            <person name="Dietrich F.S."/>
            <person name="Voegeli S."/>
            <person name="Kuo S."/>
            <person name="Philippsen P."/>
        </authorList>
    </citation>
    <scope>GENOME REANNOTATION</scope>
    <scope>SEQUENCE REVISION TO 58-59</scope>
    <source>
        <strain>ATCC 10895 / CBS 109.51 / FGSC 9923 / NRRL Y-1056</strain>
    </source>
</reference>
<keyword id="KW-1185">Reference proteome</keyword>
<keyword id="KW-0808">Transferase</keyword>
<proteinExistence type="inferred from homology"/>
<organism>
    <name type="scientific">Eremothecium gossypii (strain ATCC 10895 / CBS 109.51 / FGSC 9923 / NRRL Y-1056)</name>
    <name type="common">Yeast</name>
    <name type="synonym">Ashbya gossypii</name>
    <dbReference type="NCBI Taxonomy" id="284811"/>
    <lineage>
        <taxon>Eukaryota</taxon>
        <taxon>Fungi</taxon>
        <taxon>Dikarya</taxon>
        <taxon>Ascomycota</taxon>
        <taxon>Saccharomycotina</taxon>
        <taxon>Saccharomycetes</taxon>
        <taxon>Saccharomycetales</taxon>
        <taxon>Saccharomycetaceae</taxon>
        <taxon>Eremothecium</taxon>
    </lineage>
</organism>
<feature type="chain" id="PRO_0000175740" description="L-aminoadipate-semialdehyde dehydrogenase-phosphopantetheinyl transferase">
    <location>
        <begin position="1"/>
        <end position="276"/>
    </location>
</feature>
<evidence type="ECO:0000250" key="1"/>
<evidence type="ECO:0000305" key="2"/>
<gene>
    <name type="primary">LYS5</name>
    <name type="ordered locus">AGR382W</name>
</gene>
<dbReference type="EC" id="2.7.8.7"/>
<dbReference type="EMBL" id="AE016820">
    <property type="protein sequence ID" value="AAS54872.2"/>
    <property type="molecule type" value="Genomic_DNA"/>
</dbReference>
<dbReference type="RefSeq" id="NP_987048.2">
    <property type="nucleotide sequence ID" value="NM_212110.2"/>
</dbReference>
<dbReference type="SMR" id="Q74Z24"/>
<dbReference type="FunCoup" id="Q74Z24">
    <property type="interactions" value="39"/>
</dbReference>
<dbReference type="STRING" id="284811.Q74Z24"/>
<dbReference type="EnsemblFungi" id="AAS54872">
    <property type="protein sequence ID" value="AAS54872"/>
    <property type="gene ID" value="AGOS_AGR382W"/>
</dbReference>
<dbReference type="GeneID" id="4623352"/>
<dbReference type="KEGG" id="ago:AGOS_AGR382W"/>
<dbReference type="eggNOG" id="KOG0945">
    <property type="taxonomic scope" value="Eukaryota"/>
</dbReference>
<dbReference type="HOGENOM" id="CLU_075352_0_0_1"/>
<dbReference type="InParanoid" id="Q74Z24"/>
<dbReference type="OMA" id="PWAGIFV"/>
<dbReference type="OrthoDB" id="26719at2759"/>
<dbReference type="Proteomes" id="UP000000591">
    <property type="component" value="Chromosome VII"/>
</dbReference>
<dbReference type="GO" id="GO:0005829">
    <property type="term" value="C:cytosol"/>
    <property type="evidence" value="ECO:0000318"/>
    <property type="project" value="GO_Central"/>
</dbReference>
<dbReference type="GO" id="GO:0008897">
    <property type="term" value="F:holo-[acyl-carrier-protein] synthase activity"/>
    <property type="evidence" value="ECO:0000318"/>
    <property type="project" value="GO_Central"/>
</dbReference>
<dbReference type="GO" id="GO:0000287">
    <property type="term" value="F:magnesium ion binding"/>
    <property type="evidence" value="ECO:0007669"/>
    <property type="project" value="InterPro"/>
</dbReference>
<dbReference type="GO" id="GO:0019878">
    <property type="term" value="P:lysine biosynthetic process via aminoadipic acid"/>
    <property type="evidence" value="ECO:0000318"/>
    <property type="project" value="GO_Central"/>
</dbReference>
<dbReference type="Gene3D" id="3.90.470.20">
    <property type="entry name" value="4'-phosphopantetheinyl transferase domain"/>
    <property type="match status" value="2"/>
</dbReference>
<dbReference type="InterPro" id="IPR008278">
    <property type="entry name" value="4-PPantetheinyl_Trfase_dom"/>
</dbReference>
<dbReference type="InterPro" id="IPR037143">
    <property type="entry name" value="4-PPantetheinyl_Trfase_dom_sf"/>
</dbReference>
<dbReference type="InterPro" id="IPR050559">
    <property type="entry name" value="P-Pant_transferase_sf"/>
</dbReference>
<dbReference type="PANTHER" id="PTHR12215:SF10">
    <property type="entry name" value="L-AMINOADIPATE-SEMIALDEHYDE DEHYDROGENASE-PHOSPHOPANTETHEINYL TRANSFERASE"/>
    <property type="match status" value="1"/>
</dbReference>
<dbReference type="PANTHER" id="PTHR12215">
    <property type="entry name" value="PHOSPHOPANTETHEINE TRANSFERASE"/>
    <property type="match status" value="1"/>
</dbReference>
<dbReference type="Pfam" id="PF01648">
    <property type="entry name" value="ACPS"/>
    <property type="match status" value="1"/>
</dbReference>
<dbReference type="SUPFAM" id="SSF56214">
    <property type="entry name" value="4'-phosphopantetheinyl transferase"/>
    <property type="match status" value="2"/>
</dbReference>
<accession>Q74Z24</accession>
<protein>
    <recommendedName>
        <fullName>L-aminoadipate-semialdehyde dehydrogenase-phosphopantetheinyl transferase</fullName>
        <shortName>AASD-PPT</shortName>
        <ecNumber>2.7.8.7</ecNumber>
    </recommendedName>
</protein>
<name>LYS5_EREGS</name>
<comment type="function">
    <text evidence="1">Catalyzes the transfer of a 4'-phosphopantetheine moiety from coenzyme A to a serine residue of acceptor proteins, such as alpha-aminoadipate reductase. Necessary for alpha-aminoadipate reductase activity (By similarity).</text>
</comment>
<comment type="catalytic activity">
    <reaction>
        <text>apo-[ACP] + CoA = holo-[ACP] + adenosine 3',5'-bisphosphate + H(+)</text>
        <dbReference type="Rhea" id="RHEA:12068"/>
        <dbReference type="Rhea" id="RHEA-COMP:9685"/>
        <dbReference type="Rhea" id="RHEA-COMP:9690"/>
        <dbReference type="ChEBI" id="CHEBI:15378"/>
        <dbReference type="ChEBI" id="CHEBI:29999"/>
        <dbReference type="ChEBI" id="CHEBI:57287"/>
        <dbReference type="ChEBI" id="CHEBI:58343"/>
        <dbReference type="ChEBI" id="CHEBI:64479"/>
        <dbReference type="EC" id="2.7.8.7"/>
    </reaction>
</comment>
<comment type="similarity">
    <text evidence="2">Belongs to the P-Pant transferase superfamily. AcpS family.</text>
</comment>